<accession>Q2HWG4</accession>
<accession>A0A0P0WAW6</accession>
<sequence>MEGGRGVTRVLLVDDSPVDRRVVQLLLSSSACAGSFHVIAVDSAKKAMEFLGLKEEGKEQAIDMVLTDYCMPEMTGYELLKAIKALSPLKPIPVIVMSSENEPQRISRCMNAGAEDFIVKPLQSKDVQRLRNCSPANTQCCDAGSDGKPPLLLLPSDHVVVDATAASPPPPPSRRRAHFAGVAMVLHSSSVELSHYFPFLFKFILLVYAILCLGELLHRWSNGCFLNLWCA</sequence>
<feature type="chain" id="PRO_0000433816" description="Two-component response regulator ORR1">
    <location>
        <begin position="1"/>
        <end position="231"/>
    </location>
</feature>
<feature type="domain" description="Response regulatory" evidence="2">
    <location>
        <begin position="9"/>
        <end position="135"/>
    </location>
</feature>
<feature type="modified residue" description="4-aspartylphosphate" evidence="2">
    <location>
        <position position="68"/>
    </location>
</feature>
<reference key="1">
    <citation type="journal article" date="2006" name="Gene">
        <title>Identification and characterization of cytokinin-signalling gene families in rice.</title>
        <authorList>
            <person name="Ito Y."/>
            <person name="Kurata N."/>
        </authorList>
    </citation>
    <scope>NUCLEOTIDE SEQUENCE [GENOMIC DNA]</scope>
    <scope>TISSUE SPECIFICITY</scope>
    <source>
        <strain>cv. Nipponbare</strain>
    </source>
</reference>
<reference key="2">
    <citation type="journal article" date="2007" name="Plant Cell Physiol.">
        <title>Overexpression of a type-A response regulator alters rice morphology and cytokinin metabolism.</title>
        <authorList>
            <person name="Hirose N."/>
            <person name="Makita N."/>
            <person name="Kojima M."/>
            <person name="Kamada-Nobusada T."/>
            <person name="Sakakibara H."/>
        </authorList>
    </citation>
    <scope>NUCLEOTIDE SEQUENCE [MRNA]</scope>
    <source>
        <strain>cv. Nipponbare</strain>
    </source>
</reference>
<reference key="3">
    <citation type="journal article" date="2002" name="Nature">
        <title>Sequence and analysis of rice chromosome 4.</title>
        <authorList>
            <person name="Feng Q."/>
            <person name="Zhang Y."/>
            <person name="Hao P."/>
            <person name="Wang S."/>
            <person name="Fu G."/>
            <person name="Huang Y."/>
            <person name="Li Y."/>
            <person name="Zhu J."/>
            <person name="Liu Y."/>
            <person name="Hu X."/>
            <person name="Jia P."/>
            <person name="Zhang Y."/>
            <person name="Zhao Q."/>
            <person name="Ying K."/>
            <person name="Yu S."/>
            <person name="Tang Y."/>
            <person name="Weng Q."/>
            <person name="Zhang L."/>
            <person name="Lu Y."/>
            <person name="Mu J."/>
            <person name="Lu Y."/>
            <person name="Zhang L.S."/>
            <person name="Yu Z."/>
            <person name="Fan D."/>
            <person name="Liu X."/>
            <person name="Lu T."/>
            <person name="Li C."/>
            <person name="Wu Y."/>
            <person name="Sun T."/>
            <person name="Lei H."/>
            <person name="Li T."/>
            <person name="Hu H."/>
            <person name="Guan J."/>
            <person name="Wu M."/>
            <person name="Zhang R."/>
            <person name="Zhou B."/>
            <person name="Chen Z."/>
            <person name="Chen L."/>
            <person name="Jin Z."/>
            <person name="Wang R."/>
            <person name="Yin H."/>
            <person name="Cai Z."/>
            <person name="Ren S."/>
            <person name="Lv G."/>
            <person name="Gu W."/>
            <person name="Zhu G."/>
            <person name="Tu Y."/>
            <person name="Jia J."/>
            <person name="Zhang Y."/>
            <person name="Chen J."/>
            <person name="Kang H."/>
            <person name="Chen X."/>
            <person name="Shao C."/>
            <person name="Sun Y."/>
            <person name="Hu Q."/>
            <person name="Zhang X."/>
            <person name="Zhang W."/>
            <person name="Wang L."/>
            <person name="Ding C."/>
            <person name="Sheng H."/>
            <person name="Gu J."/>
            <person name="Chen S."/>
            <person name="Ni L."/>
            <person name="Zhu F."/>
            <person name="Chen W."/>
            <person name="Lan L."/>
            <person name="Lai Y."/>
            <person name="Cheng Z."/>
            <person name="Gu M."/>
            <person name="Jiang J."/>
            <person name="Li J."/>
            <person name="Hong G."/>
            <person name="Xue Y."/>
            <person name="Han B."/>
        </authorList>
    </citation>
    <scope>NUCLEOTIDE SEQUENCE [LARGE SCALE GENOMIC DNA]</scope>
    <source>
        <strain>cv. Nipponbare</strain>
    </source>
</reference>
<reference key="4">
    <citation type="journal article" date="2005" name="Nature">
        <title>The map-based sequence of the rice genome.</title>
        <authorList>
            <consortium name="International rice genome sequencing project (IRGSP)"/>
        </authorList>
    </citation>
    <scope>NUCLEOTIDE SEQUENCE [LARGE SCALE GENOMIC DNA]</scope>
    <source>
        <strain>cv. Nipponbare</strain>
    </source>
</reference>
<reference key="5">
    <citation type="journal article" date="2008" name="Nucleic Acids Res.">
        <title>The rice annotation project database (RAP-DB): 2008 update.</title>
        <authorList>
            <consortium name="The rice annotation project (RAP)"/>
        </authorList>
    </citation>
    <scope>GENOME REANNOTATION</scope>
    <source>
        <strain>cv. Nipponbare</strain>
    </source>
</reference>
<reference key="6">
    <citation type="journal article" date="2013" name="Rice">
        <title>Improvement of the Oryza sativa Nipponbare reference genome using next generation sequence and optical map data.</title>
        <authorList>
            <person name="Kawahara Y."/>
            <person name="de la Bastide M."/>
            <person name="Hamilton J.P."/>
            <person name="Kanamori H."/>
            <person name="McCombie W.R."/>
            <person name="Ouyang S."/>
            <person name="Schwartz D.C."/>
            <person name="Tanaka T."/>
            <person name="Wu J."/>
            <person name="Zhou S."/>
            <person name="Childs K.L."/>
            <person name="Davidson R.M."/>
            <person name="Lin H."/>
            <person name="Quesada-Ocampo L."/>
            <person name="Vaillancourt B."/>
            <person name="Sakai H."/>
            <person name="Lee S.S."/>
            <person name="Kim J."/>
            <person name="Numa H."/>
            <person name="Itoh T."/>
            <person name="Buell C.R."/>
            <person name="Matsumoto T."/>
        </authorList>
    </citation>
    <scope>GENOME REANNOTATION</scope>
    <source>
        <strain>cv. Nipponbare</strain>
    </source>
</reference>
<reference key="7">
    <citation type="journal article" date="2003" name="Science">
        <title>Collection, mapping, and annotation of over 28,000 cDNA clones from japonica rice.</title>
        <authorList>
            <consortium name="The rice full-length cDNA consortium"/>
        </authorList>
    </citation>
    <scope>NUCLEOTIDE SEQUENCE [LARGE SCALE MRNA]</scope>
    <source>
        <strain>cv. Nipponbare</strain>
    </source>
</reference>
<reference key="8">
    <citation type="journal article" date="2006" name="Plant Physiol.">
        <title>Whole-genome analysis of Oryza sativa reveals similar architecture of two-component signaling machinery with Arabidopsis.</title>
        <authorList>
            <person name="Pareek A."/>
            <person name="Singh A."/>
            <person name="Kumar M."/>
            <person name="Kushwaha H.R."/>
            <person name="Lynn A.M."/>
            <person name="Singla-Pareek S.L."/>
        </authorList>
    </citation>
    <scope>DISRUPTION PHENOTYPE</scope>
</reference>
<reference key="9">
    <citation type="journal article" date="2007" name="Plant Physiol.">
        <title>Nomenclature for two-component signaling elements of rice.</title>
        <authorList>
            <person name="Schaller G.E."/>
            <person name="Doi K."/>
            <person name="Hwang I."/>
            <person name="Kieber J.J."/>
            <person name="Khurana J.P."/>
            <person name="Kurata N."/>
            <person name="Mizuno T."/>
            <person name="Pareek A."/>
            <person name="Shiu S.H."/>
            <person name="Wu P."/>
            <person name="Yip W.K."/>
        </authorList>
    </citation>
    <scope>GENE FAMILY</scope>
    <scope>NOMENCLATURE</scope>
</reference>
<reference key="10">
    <citation type="journal article" date="2011" name="Plant J.">
        <title>The auxin responsive AP2/ERF transcription factor CROWN ROOTLESS5 is involved in crown root initiation in rice through the induction of OsRR1, a type-A response regulator of cytokinin signaling.</title>
        <authorList>
            <person name="Kitomi Y."/>
            <person name="Ito H."/>
            <person name="Hobo T."/>
            <person name="Aya K."/>
            <person name="Kitano H."/>
            <person name="Inukai Y."/>
        </authorList>
    </citation>
    <scope>FUNCTION</scope>
</reference>
<reference key="11">
    <citation type="journal article" date="2012" name="Plant Physiol.">
        <title>Characterization of genes involved in cytokinin signaling and metabolism from rice.</title>
        <authorList>
            <person name="Tsai Y.C."/>
            <person name="Weir N.R."/>
            <person name="Hill K."/>
            <person name="Zhang W."/>
            <person name="Kim H.J."/>
            <person name="Shiu S.H."/>
            <person name="Schaller G.E."/>
            <person name="Kieber J.J."/>
        </authorList>
    </citation>
    <scope>INDUCTION BY CYTOKININ</scope>
</reference>
<evidence type="ECO:0000250" key="1">
    <source>
        <dbReference type="UniProtKB" id="Q9ZWS9"/>
    </source>
</evidence>
<evidence type="ECO:0000255" key="2">
    <source>
        <dbReference type="PROSITE-ProRule" id="PRU00169"/>
    </source>
</evidence>
<evidence type="ECO:0000269" key="3">
    <source>
    </source>
</evidence>
<evidence type="ECO:0000269" key="4">
    <source>
    </source>
</evidence>
<evidence type="ECO:0000269" key="5">
    <source>
    </source>
</evidence>
<evidence type="ECO:0000269" key="6">
    <source>
    </source>
</evidence>
<evidence type="ECO:0000303" key="7">
    <source>
    </source>
</evidence>
<evidence type="ECO:0000303" key="8">
    <source>
    </source>
</evidence>
<evidence type="ECO:0000303" key="9">
    <source>
    </source>
</evidence>
<evidence type="ECO:0000305" key="10"/>
<evidence type="ECO:0000312" key="11">
    <source>
        <dbReference type="EMBL" id="BAF14796.1"/>
    </source>
</evidence>
<name>ORR1_ORYSJ</name>
<dbReference type="EMBL" id="BR000311">
    <property type="protein sequence ID" value="FAA00263.1"/>
    <property type="molecule type" value="Genomic_DNA"/>
</dbReference>
<dbReference type="EMBL" id="AB249661">
    <property type="protein sequence ID" value="BAE79355.1"/>
    <property type="molecule type" value="mRNA"/>
</dbReference>
<dbReference type="EMBL" id="BX548156">
    <property type="status" value="NOT_ANNOTATED_CDS"/>
    <property type="molecule type" value="Genomic_DNA"/>
</dbReference>
<dbReference type="EMBL" id="AP008210">
    <property type="protein sequence ID" value="BAF14796.1"/>
    <property type="molecule type" value="Genomic_DNA"/>
</dbReference>
<dbReference type="EMBL" id="AP014960">
    <property type="protein sequence ID" value="BAS89358.1"/>
    <property type="molecule type" value="Genomic_DNA"/>
</dbReference>
<dbReference type="EMBL" id="AK072736">
    <property type="protein sequence ID" value="BAG93120.1"/>
    <property type="molecule type" value="mRNA"/>
</dbReference>
<dbReference type="EMBL" id="AK105815">
    <property type="protein sequence ID" value="BAG97382.1"/>
    <property type="molecule type" value="mRNA"/>
</dbReference>
<dbReference type="RefSeq" id="XP_015636992.1">
    <property type="nucleotide sequence ID" value="XM_015781506.1"/>
</dbReference>
<dbReference type="SMR" id="Q2HWG4"/>
<dbReference type="FunCoup" id="Q2HWG4">
    <property type="interactions" value="29"/>
</dbReference>
<dbReference type="STRING" id="39947.Q2HWG4"/>
<dbReference type="PaxDb" id="39947-Q2HWG4"/>
<dbReference type="EnsemblPlants" id="Os04t0442300-01">
    <property type="protein sequence ID" value="Os04t0442300-01"/>
    <property type="gene ID" value="Os04g0442300"/>
</dbReference>
<dbReference type="EnsemblPlants" id="Os04t0442300-02">
    <property type="protein sequence ID" value="Os04t0442300-02"/>
    <property type="gene ID" value="Os04g0442300"/>
</dbReference>
<dbReference type="Gramene" id="Os04t0442300-01">
    <property type="protein sequence ID" value="Os04t0442300-01"/>
    <property type="gene ID" value="Os04g0442300"/>
</dbReference>
<dbReference type="Gramene" id="Os04t0442300-02">
    <property type="protein sequence ID" value="Os04t0442300-02"/>
    <property type="gene ID" value="Os04g0442300"/>
</dbReference>
<dbReference type="KEGG" id="dosa:Os04g0442300"/>
<dbReference type="eggNOG" id="KOG1601">
    <property type="taxonomic scope" value="Eukaryota"/>
</dbReference>
<dbReference type="HOGENOM" id="CLU_000445_69_5_1"/>
<dbReference type="InParanoid" id="Q2HWG4"/>
<dbReference type="OMA" id="KCSPANT"/>
<dbReference type="OrthoDB" id="60033at2759"/>
<dbReference type="Proteomes" id="UP000000763">
    <property type="component" value="Chromosome 4"/>
</dbReference>
<dbReference type="Proteomes" id="UP000059680">
    <property type="component" value="Chromosome 4"/>
</dbReference>
<dbReference type="GO" id="GO:0048830">
    <property type="term" value="P:adventitious root development"/>
    <property type="evidence" value="ECO:0000315"/>
    <property type="project" value="UniProtKB"/>
</dbReference>
<dbReference type="GO" id="GO:0009736">
    <property type="term" value="P:cytokinin-activated signaling pathway"/>
    <property type="evidence" value="ECO:0007669"/>
    <property type="project" value="UniProtKB-KW"/>
</dbReference>
<dbReference type="GO" id="GO:0000160">
    <property type="term" value="P:phosphorelay signal transduction system"/>
    <property type="evidence" value="ECO:0007669"/>
    <property type="project" value="UniProtKB-KW"/>
</dbReference>
<dbReference type="CDD" id="cd17581">
    <property type="entry name" value="REC_typeA_ARR"/>
    <property type="match status" value="1"/>
</dbReference>
<dbReference type="Gene3D" id="3.40.50.2300">
    <property type="match status" value="1"/>
</dbReference>
<dbReference type="InterPro" id="IPR045279">
    <property type="entry name" value="ARR-like"/>
</dbReference>
<dbReference type="InterPro" id="IPR011006">
    <property type="entry name" value="CheY-like_superfamily"/>
</dbReference>
<dbReference type="InterPro" id="IPR001789">
    <property type="entry name" value="Sig_transdc_resp-reg_receiver"/>
</dbReference>
<dbReference type="PANTHER" id="PTHR43874">
    <property type="entry name" value="TWO-COMPONENT RESPONSE REGULATOR"/>
    <property type="match status" value="1"/>
</dbReference>
<dbReference type="PANTHER" id="PTHR43874:SF28">
    <property type="entry name" value="TWO-COMPONENT RESPONSE REGULATOR ORR1"/>
    <property type="match status" value="1"/>
</dbReference>
<dbReference type="Pfam" id="PF00072">
    <property type="entry name" value="Response_reg"/>
    <property type="match status" value="1"/>
</dbReference>
<dbReference type="SMART" id="SM00448">
    <property type="entry name" value="REC"/>
    <property type="match status" value="1"/>
</dbReference>
<dbReference type="SUPFAM" id="SSF52172">
    <property type="entry name" value="CheY-like"/>
    <property type="match status" value="1"/>
</dbReference>
<dbReference type="PROSITE" id="PS50110">
    <property type="entry name" value="RESPONSE_REGULATORY"/>
    <property type="match status" value="1"/>
</dbReference>
<comment type="function">
    <text evidence="1 5">Functions as a response regulator involved in His-to-Asp phosphorelay signal transduction system. Phosphorylation of the Asp residue in the receiver domain activates the ability of the protein to promote the transcription of target genes. Type-A response regulators seem to act as negative regulators of the cytokinin signaling (By similarity). Involved in adventitious (crown) root initiation under the regulation of CRL5 (PubMed:21481033).</text>
</comment>
<comment type="tissue specificity">
    <text evidence="4">Expressed in roots, leaf blades, leaf sheaths, shoot apex, flowers and panicles.</text>
</comment>
<comment type="induction">
    <text evidence="6">By cytokinin in roots and shoots.</text>
</comment>
<comment type="PTM">
    <text evidence="10">Two-component system major event consists of a His-to-Asp phosphorelay between a sensor histidine kinase (HK) and a response regulator (RR). In plants, the His-to-Asp phosphorelay involves an additional intermediate named Histidine-containing phosphotransfer protein (HPt). This multistep phosphorelay consists of a His-Asp-His-Asp sequential transfer of a phosphate group between first a His and an Asp of the HK protein, followed by the transfer to a conserved His of the HPt protein and finally the transfer to an Asp in the receiver domain of the RR protein.</text>
</comment>
<comment type="disruption phenotype">
    <text evidence="3">Dwarf, albino, lesion mimic and low fertility phenotypes.</text>
</comment>
<comment type="miscellaneous">
    <text evidence="6">Crl5 mutant plants overexpressing RR1 display significantly increased adventitious (crown) root formation compared with crl5 mutant plants.</text>
</comment>
<comment type="similarity">
    <text evidence="10">Belongs to the ARR family. Type-A subfamily.</text>
</comment>
<proteinExistence type="evidence at transcript level"/>
<organism>
    <name type="scientific">Oryza sativa subsp. japonica</name>
    <name type="common">Rice</name>
    <dbReference type="NCBI Taxonomy" id="39947"/>
    <lineage>
        <taxon>Eukaryota</taxon>
        <taxon>Viridiplantae</taxon>
        <taxon>Streptophyta</taxon>
        <taxon>Embryophyta</taxon>
        <taxon>Tracheophyta</taxon>
        <taxon>Spermatophyta</taxon>
        <taxon>Magnoliopsida</taxon>
        <taxon>Liliopsida</taxon>
        <taxon>Poales</taxon>
        <taxon>Poaceae</taxon>
        <taxon>BOP clade</taxon>
        <taxon>Oryzoideae</taxon>
        <taxon>Oryzeae</taxon>
        <taxon>Oryzinae</taxon>
        <taxon>Oryza</taxon>
        <taxon>Oryza sativa</taxon>
    </lineage>
</organism>
<protein>
    <recommendedName>
        <fullName evidence="10">Two-component response regulator ORR1</fullName>
    </recommendedName>
    <alternativeName>
        <fullName evidence="8">OsRR1</fullName>
    </alternativeName>
    <alternativeName>
        <fullName evidence="7">OsRRA9</fullName>
    </alternativeName>
</protein>
<gene>
    <name evidence="9" type="primary">RR1</name>
    <name evidence="11" type="ordered locus">Os04g0442300</name>
    <name evidence="10" type="ordered locus">LOC_Os04g36070</name>
</gene>
<keyword id="KW-0932">Cytokinin signaling pathway</keyword>
<keyword id="KW-0597">Phosphoprotein</keyword>
<keyword id="KW-1185">Reference proteome</keyword>
<keyword id="KW-0804">Transcription</keyword>
<keyword id="KW-0805">Transcription regulation</keyword>
<keyword id="KW-0902">Two-component regulatory system</keyword>